<name>ABCGB_DICDI</name>
<organism>
    <name type="scientific">Dictyostelium discoideum</name>
    <name type="common">Social amoeba</name>
    <dbReference type="NCBI Taxonomy" id="44689"/>
    <lineage>
        <taxon>Eukaryota</taxon>
        <taxon>Amoebozoa</taxon>
        <taxon>Evosea</taxon>
        <taxon>Eumycetozoa</taxon>
        <taxon>Dictyostelia</taxon>
        <taxon>Dictyosteliales</taxon>
        <taxon>Dictyosteliaceae</taxon>
        <taxon>Dictyostelium</taxon>
    </lineage>
</organism>
<proteinExistence type="inferred from homology"/>
<comment type="subcellular location">
    <subcellularLocation>
        <location evidence="3">Membrane</location>
        <topology evidence="3">Multi-pass membrane protein</topology>
    </subcellularLocation>
</comment>
<comment type="similarity">
    <text evidence="3">Belongs to the ABC transporter superfamily. ABCG family. PDR (TC 3.A.1.205) subfamily.</text>
</comment>
<feature type="chain" id="PRO_0000391398" description="ABC transporter G family member 11">
    <location>
        <begin position="1"/>
        <end position="1442"/>
    </location>
</feature>
<feature type="transmembrane region" description="Helical" evidence="1">
    <location>
        <begin position="482"/>
        <end position="502"/>
    </location>
</feature>
<feature type="transmembrane region" description="Helical" evidence="1">
    <location>
        <begin position="518"/>
        <end position="538"/>
    </location>
</feature>
<feature type="transmembrane region" description="Helical" evidence="1">
    <location>
        <begin position="567"/>
        <end position="587"/>
    </location>
</feature>
<feature type="transmembrane region" description="Helical" evidence="1">
    <location>
        <begin position="592"/>
        <end position="612"/>
    </location>
</feature>
<feature type="transmembrane region" description="Helical" evidence="1">
    <location>
        <begin position="627"/>
        <end position="647"/>
    </location>
</feature>
<feature type="transmembrane region" description="Helical" evidence="1">
    <location>
        <begin position="737"/>
        <end position="757"/>
    </location>
</feature>
<feature type="transmembrane region" description="Helical" evidence="1">
    <location>
        <begin position="1147"/>
        <end position="1167"/>
    </location>
</feature>
<feature type="transmembrane region" description="Helical" evidence="1">
    <location>
        <begin position="1181"/>
        <end position="1201"/>
    </location>
</feature>
<feature type="transmembrane region" description="Helical" evidence="1">
    <location>
        <begin position="1220"/>
        <end position="1240"/>
    </location>
</feature>
<feature type="transmembrane region" description="Helical" evidence="1">
    <location>
        <begin position="1259"/>
        <end position="1279"/>
    </location>
</feature>
<feature type="transmembrane region" description="Helical" evidence="1">
    <location>
        <begin position="1286"/>
        <end position="1306"/>
    </location>
</feature>
<feature type="transmembrane region" description="Helical" evidence="1">
    <location>
        <begin position="1416"/>
        <end position="1436"/>
    </location>
</feature>
<feature type="domain" description="ABC transporter 1" evidence="2">
    <location>
        <begin position="125"/>
        <end position="373"/>
    </location>
</feature>
<feature type="domain" description="ABC transmembrane type-2 1">
    <location>
        <begin position="478"/>
        <end position="718"/>
    </location>
</feature>
<feature type="domain" description="ABC transporter 2" evidence="2">
    <location>
        <begin position="808"/>
        <end position="1052"/>
    </location>
</feature>
<feature type="domain" description="ABC transmembrane type-2 2">
    <location>
        <begin position="1144"/>
        <end position="1369"/>
    </location>
</feature>
<feature type="binding site" evidence="2">
    <location>
        <begin position="844"/>
        <end position="851"/>
    </location>
    <ligand>
        <name>ATP</name>
        <dbReference type="ChEBI" id="CHEBI:30616"/>
    </ligand>
</feature>
<feature type="sequence conflict" description="In Ref. 1; AAL91497." evidence="3" ref="1">
    <original>GLIIGFTF</original>
    <variation>VKYWFYI</variation>
    <location>
        <begin position="1157"/>
        <end position="1164"/>
    </location>
</feature>
<sequence>MVHNNDGDNNDQEMQEIGINEKRSQFPHISVEESRQEFDSFSNNIEGESKQFGMNRDAESNMAVESEEDFKLRKYFENSNRMHLENGGNEKKMGVSIRNLTVVGLGADASVIADMSTPFYGLVKLFTPSFWTKKTSTFDILHDVTTFCKDGEMVLVLGRPGAGCSTLLRVIANQTASYVSVKGDITYGGIPSKEFEKYRGEPIYTPEEDSHHPTLTVRETLDFALKCKTPGNRLPDETKRSFRDKVFNLLLSMFGIVHQADTIVGNEFIRGLSGGERKRLTITEAMVSSASITCWDCSTRGLDAASAFDYAKSIRIMSDTLHKTTIASFYQASDSIYNVFDKVCVLEKGRCIYFGPVGMAKQYFMSLGFDCEPRKSTPDFLTGVTNPQERIIKKGFEGRTPETSADFEEAWKNSDIYRDQLQEQKEYEELIERTQPKVAFVQEVRDANSKTNFKKSQYTTSFVTQVIALIKRNFALVLNDKFGMYSKYLSVLIQGFVYASLFYNMDTDITGLFTRGGAILSAVIFNAFLSIGEMAMTFYGRRVLQKHKSYALYRPSALHIAQVVTDIPFTAIQVFLFSIIAYFMFGLQYDAGKFFIFCFTLLGASLACTALFRCFGYLCPSMYIAQNISNVFIIFMLTYSGYTIPIPKMHPWFSWFRHINIFTYAFKALMANEFEGLDFNCKESAIPYGPAYQGSEFDAYRICPLGGIEQGSLYFKGDFYMDKTLSFATGEMSQNVIIVYCWWVFFVVCNMFAMEYIDHTSGGYTHKVYKKGKAPKMNDVEEEKQQNAIVAKATSNMKDTLHMDGGIFTWQNIRYTVKVPGGERLLLDNIEGWIKPGQMTALMGSSGAGKTTLLDVLAKRKTLGVVEGDSHLNGRELEIDFERITGYVEQMDVHNPGLTVREALRFSAKLRQEPEVSLEEKFKYVEHVLEMMEMKHLGDALIGTLETGVGISVEERKRLTIGVELVAKPQILFLDEPTSGLDAQSSYNIIKFIRKLADAGMPLVCTIHQPSSVLFEHFDRILLLAKGGKTVYFGDIGEKSKTLTSYFERHGVRPCTESENPAEYILEATGAGVHGKSDVNWPEAWKQSPELADISRELAALKEQGAQQYKPRSDGPAREFSQSTWYQTKEVYKRLNLIWWRDPYYTYGSFVQAALCGLIIGFTFWNLQGSSSDMNQRIFFIFEALMLGILLIFVVMPQLIIQREYFKRDFASKFYSWFPFAISIVVVELPFIVISGTIFFFCSFWTAGLHKTSDDEQTFYFWFIFIIFMFFCVSFGQAVAAVCINMFFAMTLIPLLIVFLFLFCGVMVPPSSIPTFWRGWVYHLNPCRYFMEGIITNILKTVRVECSEEDMAIFTFPKSYNTCQNYTSAFQSYKPSGYVESATLNGEPACGYCIYKNGEEYYETLGWSADNRWRNVGIIIGFFVFNILMVILFVYLTRKGSR</sequence>
<dbReference type="EMBL" id="AF482390">
    <property type="protein sequence ID" value="AAL91497.1"/>
    <property type="molecule type" value="Genomic_DNA"/>
</dbReference>
<dbReference type="EMBL" id="AAFI02000005">
    <property type="protein sequence ID" value="EAL71956.1"/>
    <property type="molecule type" value="Genomic_DNA"/>
</dbReference>
<dbReference type="RefSeq" id="XP_646079.1">
    <property type="nucleotide sequence ID" value="XM_640987.1"/>
</dbReference>
<dbReference type="SMR" id="Q55DQ2"/>
<dbReference type="FunCoup" id="Q55DQ2">
    <property type="interactions" value="7"/>
</dbReference>
<dbReference type="STRING" id="44689.Q55DQ2"/>
<dbReference type="PaxDb" id="44689-DDB0191518"/>
<dbReference type="EnsemblProtists" id="EAL71956">
    <property type="protein sequence ID" value="EAL71956"/>
    <property type="gene ID" value="DDB_G0269212"/>
</dbReference>
<dbReference type="GeneID" id="8617029"/>
<dbReference type="KEGG" id="ddi:DDB_G0269212"/>
<dbReference type="dictyBase" id="DDB_G0269212">
    <property type="gene designation" value="abcG11"/>
</dbReference>
<dbReference type="VEuPathDB" id="AmoebaDB:DDB_G0269212"/>
<dbReference type="eggNOG" id="KOG0065">
    <property type="taxonomic scope" value="Eukaryota"/>
</dbReference>
<dbReference type="HOGENOM" id="CLU_000604_35_6_1"/>
<dbReference type="InParanoid" id="Q55DQ2"/>
<dbReference type="OMA" id="FCISNWA"/>
<dbReference type="PhylomeDB" id="Q55DQ2"/>
<dbReference type="PRO" id="PR:Q55DQ2"/>
<dbReference type="Proteomes" id="UP000002195">
    <property type="component" value="Chromosome 1"/>
</dbReference>
<dbReference type="GO" id="GO:0016020">
    <property type="term" value="C:membrane"/>
    <property type="evidence" value="ECO:0007669"/>
    <property type="project" value="UniProtKB-SubCell"/>
</dbReference>
<dbReference type="GO" id="GO:0140359">
    <property type="term" value="F:ABC-type transporter activity"/>
    <property type="evidence" value="ECO:0007669"/>
    <property type="project" value="InterPro"/>
</dbReference>
<dbReference type="GO" id="GO:0005524">
    <property type="term" value="F:ATP binding"/>
    <property type="evidence" value="ECO:0007669"/>
    <property type="project" value="UniProtKB-KW"/>
</dbReference>
<dbReference type="GO" id="GO:0016887">
    <property type="term" value="F:ATP hydrolysis activity"/>
    <property type="evidence" value="ECO:0007669"/>
    <property type="project" value="InterPro"/>
</dbReference>
<dbReference type="GO" id="GO:0042626">
    <property type="term" value="F:ATPase-coupled transmembrane transporter activity"/>
    <property type="evidence" value="ECO:0000317"/>
    <property type="project" value="dictyBase"/>
</dbReference>
<dbReference type="GO" id="GO:0031152">
    <property type="term" value="P:aggregation involved in sorocarp development"/>
    <property type="evidence" value="ECO:0000318"/>
    <property type="project" value="GO_Central"/>
</dbReference>
<dbReference type="GO" id="GO:0031288">
    <property type="term" value="P:sorocarp morphogenesis"/>
    <property type="evidence" value="ECO:0000318"/>
    <property type="project" value="GO_Central"/>
</dbReference>
<dbReference type="CDD" id="cd03233">
    <property type="entry name" value="ABCG_PDR_domain1"/>
    <property type="match status" value="1"/>
</dbReference>
<dbReference type="CDD" id="cd03232">
    <property type="entry name" value="ABCG_PDR_domain2"/>
    <property type="match status" value="1"/>
</dbReference>
<dbReference type="FunFam" id="3.40.50.300:FF:000054">
    <property type="entry name" value="ABC multidrug transporter atrF"/>
    <property type="match status" value="1"/>
</dbReference>
<dbReference type="FunFam" id="3.40.50.300:FF:002175">
    <property type="entry name" value="ABC transporter G family member 9"/>
    <property type="match status" value="1"/>
</dbReference>
<dbReference type="Gene3D" id="3.40.50.300">
    <property type="entry name" value="P-loop containing nucleotide triphosphate hydrolases"/>
    <property type="match status" value="2"/>
</dbReference>
<dbReference type="InterPro" id="IPR003593">
    <property type="entry name" value="AAA+_ATPase"/>
</dbReference>
<dbReference type="InterPro" id="IPR013525">
    <property type="entry name" value="ABC2_TM"/>
</dbReference>
<dbReference type="InterPro" id="IPR029481">
    <property type="entry name" value="ABC_trans_N"/>
</dbReference>
<dbReference type="InterPro" id="IPR003439">
    <property type="entry name" value="ABC_transporter-like_ATP-bd"/>
</dbReference>
<dbReference type="InterPro" id="IPR043926">
    <property type="entry name" value="ABCG_dom"/>
</dbReference>
<dbReference type="InterPro" id="IPR034001">
    <property type="entry name" value="ABCG_PDR_1"/>
</dbReference>
<dbReference type="InterPro" id="IPR034003">
    <property type="entry name" value="ABCG_PDR_2"/>
</dbReference>
<dbReference type="InterPro" id="IPR027417">
    <property type="entry name" value="P-loop_NTPase"/>
</dbReference>
<dbReference type="InterPro" id="IPR010929">
    <property type="entry name" value="PDR_CDR_ABC"/>
</dbReference>
<dbReference type="PANTHER" id="PTHR19241">
    <property type="entry name" value="ATP-BINDING CASSETTE TRANSPORTER"/>
    <property type="match status" value="1"/>
</dbReference>
<dbReference type="Pfam" id="PF01061">
    <property type="entry name" value="ABC2_membrane"/>
    <property type="match status" value="2"/>
</dbReference>
<dbReference type="Pfam" id="PF19055">
    <property type="entry name" value="ABC2_membrane_7"/>
    <property type="match status" value="1"/>
</dbReference>
<dbReference type="Pfam" id="PF00005">
    <property type="entry name" value="ABC_tran"/>
    <property type="match status" value="2"/>
</dbReference>
<dbReference type="Pfam" id="PF14510">
    <property type="entry name" value="ABC_trans_N"/>
    <property type="match status" value="1"/>
</dbReference>
<dbReference type="Pfam" id="PF06422">
    <property type="entry name" value="PDR_CDR"/>
    <property type="match status" value="2"/>
</dbReference>
<dbReference type="SMART" id="SM00382">
    <property type="entry name" value="AAA"/>
    <property type="match status" value="2"/>
</dbReference>
<dbReference type="SUPFAM" id="SSF52540">
    <property type="entry name" value="P-loop containing nucleoside triphosphate hydrolases"/>
    <property type="match status" value="2"/>
</dbReference>
<dbReference type="PROSITE" id="PS50893">
    <property type="entry name" value="ABC_TRANSPORTER_2"/>
    <property type="match status" value="2"/>
</dbReference>
<keyword id="KW-0067">ATP-binding</keyword>
<keyword id="KW-0472">Membrane</keyword>
<keyword id="KW-0547">Nucleotide-binding</keyword>
<keyword id="KW-1185">Reference proteome</keyword>
<keyword id="KW-0677">Repeat</keyword>
<keyword id="KW-0812">Transmembrane</keyword>
<keyword id="KW-1133">Transmembrane helix</keyword>
<keyword id="KW-0813">Transport</keyword>
<gene>
    <name type="primary">abcG11</name>
    <name type="ORF">DDB_G0269212</name>
</gene>
<reference key="1">
    <citation type="journal article" date="2002" name="Eukaryot. Cell">
        <title>Evolutionary analyses of ABC transporters of Dictyostelium discoideum.</title>
        <authorList>
            <person name="Anjard C."/>
            <person name="Loomis W.F."/>
        </authorList>
    </citation>
    <scope>NUCLEOTIDE SEQUENCE [GENOMIC DNA]</scope>
    <scope>NOMENCLATURE</scope>
    <source>
        <strain>AX4</strain>
    </source>
</reference>
<reference key="2">
    <citation type="journal article" date="2005" name="Nature">
        <title>The genome of the social amoeba Dictyostelium discoideum.</title>
        <authorList>
            <person name="Eichinger L."/>
            <person name="Pachebat J.A."/>
            <person name="Gloeckner G."/>
            <person name="Rajandream M.A."/>
            <person name="Sucgang R."/>
            <person name="Berriman M."/>
            <person name="Song J."/>
            <person name="Olsen R."/>
            <person name="Szafranski K."/>
            <person name="Xu Q."/>
            <person name="Tunggal B."/>
            <person name="Kummerfeld S."/>
            <person name="Madera M."/>
            <person name="Konfortov B.A."/>
            <person name="Rivero F."/>
            <person name="Bankier A.T."/>
            <person name="Lehmann R."/>
            <person name="Hamlin N."/>
            <person name="Davies R."/>
            <person name="Gaudet P."/>
            <person name="Fey P."/>
            <person name="Pilcher K."/>
            <person name="Chen G."/>
            <person name="Saunders D."/>
            <person name="Sodergren E.J."/>
            <person name="Davis P."/>
            <person name="Kerhornou A."/>
            <person name="Nie X."/>
            <person name="Hall N."/>
            <person name="Anjard C."/>
            <person name="Hemphill L."/>
            <person name="Bason N."/>
            <person name="Farbrother P."/>
            <person name="Desany B."/>
            <person name="Just E."/>
            <person name="Morio T."/>
            <person name="Rost R."/>
            <person name="Churcher C.M."/>
            <person name="Cooper J."/>
            <person name="Haydock S."/>
            <person name="van Driessche N."/>
            <person name="Cronin A."/>
            <person name="Goodhead I."/>
            <person name="Muzny D.M."/>
            <person name="Mourier T."/>
            <person name="Pain A."/>
            <person name="Lu M."/>
            <person name="Harper D."/>
            <person name="Lindsay R."/>
            <person name="Hauser H."/>
            <person name="James K.D."/>
            <person name="Quiles M."/>
            <person name="Madan Babu M."/>
            <person name="Saito T."/>
            <person name="Buchrieser C."/>
            <person name="Wardroper A."/>
            <person name="Felder M."/>
            <person name="Thangavelu M."/>
            <person name="Johnson D."/>
            <person name="Knights A."/>
            <person name="Loulseged H."/>
            <person name="Mungall K.L."/>
            <person name="Oliver K."/>
            <person name="Price C."/>
            <person name="Quail M.A."/>
            <person name="Urushihara H."/>
            <person name="Hernandez J."/>
            <person name="Rabbinowitsch E."/>
            <person name="Steffen D."/>
            <person name="Sanders M."/>
            <person name="Ma J."/>
            <person name="Kohara Y."/>
            <person name="Sharp S."/>
            <person name="Simmonds M.N."/>
            <person name="Spiegler S."/>
            <person name="Tivey A."/>
            <person name="Sugano S."/>
            <person name="White B."/>
            <person name="Walker D."/>
            <person name="Woodward J.R."/>
            <person name="Winckler T."/>
            <person name="Tanaka Y."/>
            <person name="Shaulsky G."/>
            <person name="Schleicher M."/>
            <person name="Weinstock G.M."/>
            <person name="Rosenthal A."/>
            <person name="Cox E.C."/>
            <person name="Chisholm R.L."/>
            <person name="Gibbs R.A."/>
            <person name="Loomis W.F."/>
            <person name="Platzer M."/>
            <person name="Kay R.R."/>
            <person name="Williams J.G."/>
            <person name="Dear P.H."/>
            <person name="Noegel A.A."/>
            <person name="Barrell B.G."/>
            <person name="Kuspa A."/>
        </authorList>
    </citation>
    <scope>NUCLEOTIDE SEQUENCE [LARGE SCALE GENOMIC DNA]</scope>
    <source>
        <strain>AX4</strain>
    </source>
</reference>
<protein>
    <recommendedName>
        <fullName>ABC transporter G family member 11</fullName>
    </recommendedName>
    <alternativeName>
        <fullName>ABC transporter ABCG.11</fullName>
    </alternativeName>
</protein>
<evidence type="ECO:0000255" key="1"/>
<evidence type="ECO:0000255" key="2">
    <source>
        <dbReference type="PROSITE-ProRule" id="PRU00434"/>
    </source>
</evidence>
<evidence type="ECO:0000305" key="3"/>
<accession>Q55DQ2</accession>
<accession>Q8T681</accession>